<comment type="function">
    <text evidence="1 3">Extended spectrum beta-lactamase (ESBL) that inactivates beta-lactam antibiotics by hydrolyzing the amide group of the beta-lactam ring. Exhibits predominant penicillinase activity. Also displays high levels of cephalosporinase activity as well as measurable activity with carbapenems, including imipenem and meropenem. Plays a primary role in the intrinsic resistance of M.tuberculosis to beta-lactam antibiotics.</text>
</comment>
<comment type="catalytic activity">
    <reaction evidence="3">
        <text>a beta-lactam + H2O = a substituted beta-amino acid</text>
        <dbReference type="Rhea" id="RHEA:20401"/>
        <dbReference type="ChEBI" id="CHEBI:15377"/>
        <dbReference type="ChEBI" id="CHEBI:35627"/>
        <dbReference type="ChEBI" id="CHEBI:140347"/>
        <dbReference type="EC" id="3.5.2.6"/>
    </reaction>
</comment>
<comment type="activity regulation">
    <text evidence="3">Is inhibited by clavulanate, sulbactam and m-aminophenylboronate but not by EDTA.</text>
</comment>
<comment type="biophysicochemical properties">
    <kinetics>
        <KM evidence="3">50 uM for benzylpenicillin (at pH 6.0)</KM>
        <KM evidence="3">38 uM for phenoxymethylpenicillin (at pH 6.0)</KM>
        <KM evidence="3">94 uM for amoxicillin (at pH 6.0)</KM>
        <KM evidence="3">185 uM for azlocillin (at pH 6.0)</KM>
        <KM evidence="3">81 uM for nitrocefin (at pH 6.0)</KM>
        <KM evidence="3">798 uM for cephaloridine (at pH 6.0)</KM>
        <KM evidence="3">490 uM for cefazolin (at pH 6.0)</KM>
        <KM evidence="3">308 uM for cephalothin (at pH 6.0)</KM>
        <KM evidence="3">680 uM for cephapirin (at pH 6.0)</KM>
        <KM evidence="3">645 uM for cefamandole (at pH 6.0)</KM>
        <text evidence="3">kcat is 21 sec(-1) with benzylpenicillin as substrate. kcat is 20 sec(-1) with phenoxymethylpenicillin as substrate. kcat is 2 sec(-1) with amoxicillin as substrate. kcat is 55 sec(-1) with azlocillin as substrate. kcat is 31 sec(-1) with nitrocefin as substrate. kcat is 8 sec(-1) with cephaloridine as substrate. kcat is 8 sec(-1) with cefazolin as substrate. kcat is 8 sec(-1) with cephalothin as substrate. kcat is 3 sec(-1) with cephapirin as substrate. kcat is 22 sec(-1) with cefamandole as substrate. Assays performed at pH 6.0.</text>
    </kinetics>
</comment>
<comment type="subunit">
    <text evidence="1">Monomer.</text>
</comment>
<comment type="subcellular location">
    <subcellularLocation>
        <location evidence="1">Periplasm</location>
    </subcellularLocation>
    <subcellularLocation>
        <location evidence="3">Secreted</location>
    </subcellularLocation>
</comment>
<comment type="PTM">
    <text evidence="1">Exported by the Tat system. The position of the signal peptide cleavage has not been experimentally proven.</text>
</comment>
<comment type="miscellaneous">
    <text evidence="6">The class A beta-lactamase family has a specific amino-acid numbering system, sometimes called Ambler or ABL numbering and often misspelt as Amber. A multiple sequence alignment was used to derive a consensus sequence and then the consensus was numbered taking into account insertions and deletions. This allows use of identical numbers, e.g. for active site residues, despite differences in protein length. UniProt always uses natural numbering of residues, hence there appear to be differences in numbering between this entry and some papers.</text>
</comment>
<comment type="similarity">
    <text evidence="5">Belongs to the class-A beta-lactamase family.</text>
</comment>
<keyword id="KW-0046">Antibiotic resistance</keyword>
<keyword id="KW-0378">Hydrolase</keyword>
<keyword id="KW-0574">Periplasm</keyword>
<keyword id="KW-1185">Reference proteome</keyword>
<keyword id="KW-0964">Secreted</keyword>
<keyword id="KW-0732">Signal</keyword>
<organism>
    <name type="scientific">Mycobacterium tuberculosis (strain ATCC 25177 / H37Ra)</name>
    <dbReference type="NCBI Taxonomy" id="419947"/>
    <lineage>
        <taxon>Bacteria</taxon>
        <taxon>Bacillati</taxon>
        <taxon>Actinomycetota</taxon>
        <taxon>Actinomycetes</taxon>
        <taxon>Mycobacteriales</taxon>
        <taxon>Mycobacteriaceae</taxon>
        <taxon>Mycobacterium</taxon>
        <taxon>Mycobacterium tuberculosis complex</taxon>
    </lineage>
</organism>
<protein>
    <recommendedName>
        <fullName evidence="4">Beta-lactamase</fullName>
        <ecNumber evidence="3">3.5.2.6</ecNumber>
    </recommendedName>
    <alternativeName>
        <fullName evidence="4">Ambler class A beta-lactamase</fullName>
    </alternativeName>
</protein>
<evidence type="ECO:0000250" key="1">
    <source>
        <dbReference type="UniProtKB" id="P9WKD3"/>
    </source>
</evidence>
<evidence type="ECO:0000255" key="2">
    <source>
        <dbReference type="PROSITE-ProRule" id="PRU00648"/>
    </source>
</evidence>
<evidence type="ECO:0000269" key="3">
    <source>
    </source>
</evidence>
<evidence type="ECO:0000303" key="4">
    <source>
    </source>
</evidence>
<evidence type="ECO:0000305" key="5"/>
<evidence type="ECO:0000305" key="6">
    <source>
    </source>
</evidence>
<proteinExistence type="evidence at protein level"/>
<dbReference type="EC" id="3.5.2.6" evidence="3"/>
<dbReference type="EMBL" id="U67924">
    <property type="protein sequence ID" value="AAB07556.1"/>
    <property type="molecule type" value="Genomic_DNA"/>
</dbReference>
<dbReference type="EMBL" id="CP000611">
    <property type="protein sequence ID" value="ABQ73843.1"/>
    <property type="molecule type" value="Genomic_DNA"/>
</dbReference>
<dbReference type="RefSeq" id="WP_003410677.1">
    <property type="nucleotide sequence ID" value="NZ_CP016972.1"/>
</dbReference>
<dbReference type="SMR" id="A5U493"/>
<dbReference type="GeneID" id="45426045"/>
<dbReference type="KEGG" id="mra:MRA_2082"/>
<dbReference type="eggNOG" id="COG2367">
    <property type="taxonomic scope" value="Bacteria"/>
</dbReference>
<dbReference type="HOGENOM" id="CLU_031960_6_0_11"/>
<dbReference type="SABIO-RK" id="A5U493"/>
<dbReference type="Proteomes" id="UP000001988">
    <property type="component" value="Chromosome"/>
</dbReference>
<dbReference type="GO" id="GO:0005576">
    <property type="term" value="C:extracellular region"/>
    <property type="evidence" value="ECO:0007669"/>
    <property type="project" value="UniProtKB-SubCell"/>
</dbReference>
<dbReference type="GO" id="GO:0042597">
    <property type="term" value="C:periplasmic space"/>
    <property type="evidence" value="ECO:0007669"/>
    <property type="project" value="UniProtKB-SubCell"/>
</dbReference>
<dbReference type="GO" id="GO:0008800">
    <property type="term" value="F:beta-lactamase activity"/>
    <property type="evidence" value="ECO:0007669"/>
    <property type="project" value="UniProtKB-EC"/>
</dbReference>
<dbReference type="GO" id="GO:0030655">
    <property type="term" value="P:beta-lactam antibiotic catabolic process"/>
    <property type="evidence" value="ECO:0007669"/>
    <property type="project" value="InterPro"/>
</dbReference>
<dbReference type="GO" id="GO:0046677">
    <property type="term" value="P:response to antibiotic"/>
    <property type="evidence" value="ECO:0007669"/>
    <property type="project" value="UniProtKB-KW"/>
</dbReference>
<dbReference type="FunFam" id="3.40.710.10:FF:000033">
    <property type="entry name" value="Beta-lactamase"/>
    <property type="match status" value="1"/>
</dbReference>
<dbReference type="Gene3D" id="3.40.710.10">
    <property type="entry name" value="DD-peptidase/beta-lactamase superfamily"/>
    <property type="match status" value="1"/>
</dbReference>
<dbReference type="InterPro" id="IPR012338">
    <property type="entry name" value="Beta-lactam/transpept-like"/>
</dbReference>
<dbReference type="InterPro" id="IPR045155">
    <property type="entry name" value="Beta-lactam_cat"/>
</dbReference>
<dbReference type="InterPro" id="IPR000871">
    <property type="entry name" value="Beta-lactam_class-A"/>
</dbReference>
<dbReference type="InterPro" id="IPR023650">
    <property type="entry name" value="Beta-lactam_class-A_AS"/>
</dbReference>
<dbReference type="NCBIfam" id="NF033103">
    <property type="entry name" value="bla_class_A"/>
    <property type="match status" value="1"/>
</dbReference>
<dbReference type="NCBIfam" id="NF041154">
    <property type="entry name" value="MTB_classA_BlaC"/>
    <property type="match status" value="1"/>
</dbReference>
<dbReference type="PANTHER" id="PTHR35333">
    <property type="entry name" value="BETA-LACTAMASE"/>
    <property type="match status" value="1"/>
</dbReference>
<dbReference type="PANTHER" id="PTHR35333:SF3">
    <property type="entry name" value="BETA-LACTAMASE-TYPE TRANSPEPTIDASE FOLD CONTAINING PROTEIN"/>
    <property type="match status" value="1"/>
</dbReference>
<dbReference type="Pfam" id="PF13354">
    <property type="entry name" value="Beta-lactamase2"/>
    <property type="match status" value="1"/>
</dbReference>
<dbReference type="PRINTS" id="PR00118">
    <property type="entry name" value="BLACTAMASEA"/>
</dbReference>
<dbReference type="SUPFAM" id="SSF56601">
    <property type="entry name" value="beta-lactamase/transpeptidase-like"/>
    <property type="match status" value="1"/>
</dbReference>
<dbReference type="PROSITE" id="PS00146">
    <property type="entry name" value="BETA_LACTAMASE_A"/>
    <property type="match status" value="1"/>
</dbReference>
<gene>
    <name type="primary">blaC</name>
    <name evidence="4" type="synonym">blaA</name>
    <name type="ordered locus">MRA_2082</name>
</gene>
<sequence>MRNRGFGRRELLVAMAMLVSVTGCARHASGARPASTTLPAGADLADRFAELERRYDARLGVYVPATGTTAAIEYRADERFAFCSTFKAPLVAAVLHQNPLTHLDKLITYTSDDIRSISPVAQQHVQTGMTIGQLCDAAIRYSDGTAANLLLADLGGPGGGTAAFTGYLRSLGDTVSRLDAEEPELNRDPPGDERDTTTPHAIALVLQQLVLGNALPPDKRALLTDWMARNTTGAKRIRAGFPADWKVIDKTGTGDYGRANDIAVVWSPTGVPYVVAVMSDRAGGGYDAEPREALLAEAATCVAGVLA</sequence>
<feature type="signal peptide" description="Tat-type signal" evidence="2">
    <location>
        <begin position="1"/>
        <end position="34"/>
    </location>
</feature>
<feature type="chain" id="PRO_0000300061" description="Beta-lactamase">
    <location>
        <begin position="35"/>
        <end position="307"/>
    </location>
</feature>
<feature type="active site" description="Acyl-ester intermediate" evidence="1">
    <location>
        <position position="84"/>
    </location>
</feature>
<feature type="active site" description="Proton acceptor" evidence="1">
    <location>
        <position position="182"/>
    </location>
</feature>
<feature type="binding site" evidence="1">
    <location>
        <position position="142"/>
    </location>
    <ligand>
        <name>substrate</name>
    </ligand>
</feature>
<feature type="binding site" evidence="1">
    <location>
        <begin position="251"/>
        <end position="253"/>
    </location>
    <ligand>
        <name>substrate</name>
    </ligand>
</feature>
<feature type="site" description="Increases nucleophilicity of active site Ser" evidence="1">
    <location>
        <position position="87"/>
    </location>
</feature>
<feature type="site" description="Functions as a gatekeeper residue that regulates substrate accessibility to the enzyme active site" evidence="1">
    <location>
        <position position="117"/>
    </location>
</feature>
<accession>A5U493</accession>
<accession>P0A5I6</accession>
<accession>Q10670</accession>
<reference key="1">
    <citation type="journal article" date="1997" name="Antimicrob. Agents Chemother.">
        <title>Cloning and sequence analysis of a class A beta-lactamase from Mycobacterium tuberculosis H37Ra.</title>
        <authorList>
            <person name="Hackbarth C.J."/>
            <person name="Unsal I."/>
            <person name="Chambers H.F."/>
        </authorList>
    </citation>
    <scope>NUCLEOTIDE SEQUENCE [GENOMIC DNA]</scope>
    <source>
        <strain>ATCC 25177 / H37Ra</strain>
    </source>
</reference>
<reference key="2">
    <citation type="journal article" date="2008" name="PLoS ONE">
        <title>Genetic basis of virulence attenuation revealed by comparative genomic analysis of Mycobacterium tuberculosis strain H37Ra versus H37Rv.</title>
        <authorList>
            <person name="Zheng H."/>
            <person name="Lu L."/>
            <person name="Wang B."/>
            <person name="Pu S."/>
            <person name="Zhang X."/>
            <person name="Zhu G."/>
            <person name="Shi W."/>
            <person name="Zhang L."/>
            <person name="Wang H."/>
            <person name="Wang S."/>
            <person name="Zhao G."/>
            <person name="Zhang Y."/>
        </authorList>
    </citation>
    <scope>NUCLEOTIDE SEQUENCE [LARGE SCALE GENOMIC DNA]</scope>
    <source>
        <strain>ATCC 25177 / H37Ra</strain>
    </source>
</reference>
<reference key="3">
    <citation type="journal article" date="1991" name="Biochem. J.">
        <title>A standard numbering scheme for the class A beta-lactamases.</title>
        <authorList>
            <person name="Ambler R.P."/>
            <person name="Coulson A.F."/>
            <person name="Frere J.M."/>
            <person name="Ghuysen J.M."/>
            <person name="Joris B."/>
            <person name="Forsman M."/>
            <person name="Levesque R.C."/>
            <person name="Tiraby G."/>
            <person name="Waley S.G."/>
        </authorList>
    </citation>
    <scope>AMINO ACID NUMBERING SCHEME</scope>
</reference>
<reference key="4">
    <citation type="journal article" date="1998" name="Antimicrob. Agents Chemother.">
        <title>Recombinant expression and characterization of the major beta-lactamase of Mycobacterium tuberculosis.</title>
        <authorList>
            <person name="Voladri R.K."/>
            <person name="Lakey D.L."/>
            <person name="Hennigan S.H."/>
            <person name="Menzies B.E."/>
            <person name="Edwards K.M."/>
            <person name="Kernodle D.S."/>
        </authorList>
    </citation>
    <scope>FUNCTION</scope>
    <scope>CATALYTIC ACTIVITY</scope>
    <scope>BIOPHYSICOCHEMICAL PROPERTIES</scope>
    <scope>ACTIVITY REGULATION</scope>
    <scope>SUBCELLULAR LOCATION</scope>
    <source>
        <strain>ATCC 25177 / H37Ra</strain>
    </source>
</reference>
<name>BLAC_MYCTA</name>